<protein>
    <recommendedName>
        <fullName>SERTA domain-containing protein 2</fullName>
    </recommendedName>
    <alternativeName>
        <fullName>Transcriptional regulator interacting with the PHD-bromodomain 2</fullName>
        <shortName>TRIP-Br2</shortName>
    </alternativeName>
</protein>
<feature type="chain" id="PRO_0000191614" description="SERTA domain-containing protein 2">
    <location>
        <begin position="1"/>
        <end position="309"/>
    </location>
</feature>
<feature type="domain" description="SERTA" evidence="2">
    <location>
        <begin position="33"/>
        <end position="80"/>
    </location>
</feature>
<feature type="region of interest" description="Disordered" evidence="3">
    <location>
        <begin position="1"/>
        <end position="30"/>
    </location>
</feature>
<feature type="region of interest" description="Disordered" evidence="3">
    <location>
        <begin position="79"/>
        <end position="114"/>
    </location>
</feature>
<feature type="region of interest" description="Disordered" evidence="3">
    <location>
        <begin position="175"/>
        <end position="220"/>
    </location>
</feature>
<feature type="region of interest" description="Required for transactivation activity" evidence="1">
    <location>
        <begin position="230"/>
        <end position="306"/>
    </location>
</feature>
<feature type="short sequence motif" description="Nuclear export signal (NES)" evidence="1">
    <location>
        <begin position="233"/>
        <end position="238"/>
    </location>
</feature>
<feature type="compositionally biased region" description="Basic and acidic residues" evidence="3">
    <location>
        <begin position="8"/>
        <end position="18"/>
    </location>
</feature>
<feature type="compositionally biased region" description="Low complexity" evidence="3">
    <location>
        <begin position="89"/>
        <end position="99"/>
    </location>
</feature>
<feature type="compositionally biased region" description="Low complexity" evidence="3">
    <location>
        <begin position="175"/>
        <end position="189"/>
    </location>
</feature>
<feature type="compositionally biased region" description="Basic and acidic residues" evidence="3">
    <location>
        <begin position="204"/>
        <end position="216"/>
    </location>
</feature>
<feature type="sequence conflict" description="In Ref. 4; AAK52832." evidence="5" ref="4">
    <original>CTL</original>
    <variation>FTF</variation>
    <location>
        <begin position="138"/>
        <end position="140"/>
    </location>
</feature>
<feature type="sequence conflict" description="In Ref. 3; AAH14726." evidence="5" ref="3">
    <original>A</original>
    <variation>S</variation>
    <location>
        <position position="142"/>
    </location>
</feature>
<feature type="sequence conflict" description="In Ref. 4; AAK52832." evidence="5" ref="4">
    <original>P</original>
    <variation>S</variation>
    <location>
        <position position="145"/>
    </location>
</feature>
<feature type="sequence conflict" description="In Ref. 1; BAA95026." evidence="5" ref="1">
    <original>T</original>
    <variation>A</variation>
    <location>
        <position position="234"/>
    </location>
</feature>
<comment type="function">
    <text evidence="4">Acts at E2F-responsive promoters as coregulator to integrate signals provided by PHD- and/or bromodomain-containing transcription factors. May act as coactivator as well as corepressor of E2F1-TFDP1 and E2F4-TFDP1 complexes on E2F consensus binding sites, which would activate or inhibit E2F-target genes expression. Modulates fat storage by down-regulating the expression of key genes involved in adipocyte lipolysis, thermogenesis and oxidative metabolism.</text>
</comment>
<comment type="subunit">
    <text evidence="1">Interacts with XPO1; which mediates nuclear export. Interacts with TFDP1; modulates transactivation activity of TFDP1/E2F complexes (By similarity).</text>
</comment>
<comment type="subcellular location">
    <subcellularLocation>
        <location evidence="1">Nucleus</location>
    </subcellularLocation>
    <subcellularLocation>
        <location evidence="1">Cytoplasm</location>
    </subcellularLocation>
    <text evidence="1">Exported out of the nucleus via its NES in a XPO1-dependent manner. Once in the cytoplasm, is degraded by the proteasome (By similarity).</text>
</comment>
<comment type="tissue specificity">
    <text evidence="4">Expressed in white and brown adipose tissue.</text>
</comment>
<comment type="induction">
    <text evidence="4">Up-regulated by high fat diet in adipose tissue.</text>
</comment>
<comment type="PTM">
    <text evidence="1">Polyubiquitinated, which promotes proteasomal degradation.</text>
</comment>
<comment type="disruption phenotype">
    <text evidence="4">Resist development of obesity because of enhanced lipolysis and thermogenesis due, in part, to an increase in brown adipocytes number. On high fat diet (HFD), show reduced white adipose tissue (WAT) weight with smaller adipocyte size, improved glucose tolerance and insulin sensitivity with lower fasting glucose and insulin concentrations. Animals on HFD have higher and lower concentrations of adiponectin and leptin, respectively, compared to wild-type. They don't develop liver steatosis and have 57% less adipose tissue macrophage infiltration.</text>
</comment>
<reference key="1">
    <citation type="submission" date="2000-04" db="EMBL/GenBank/DDBJ databases">
        <title>Isolation of full-length cDNA clones from mouse brain cDNA library made by oligo-capping method.</title>
        <authorList>
            <person name="Osada N."/>
            <person name="Kusuda J."/>
            <person name="Tanuma R."/>
            <person name="Ito A."/>
            <person name="Hirata M."/>
            <person name="Sugano S."/>
            <person name="Hashimoto K."/>
        </authorList>
    </citation>
    <scope>NUCLEOTIDE SEQUENCE [LARGE SCALE MRNA]</scope>
    <source>
        <strain>C57BL/6J</strain>
        <tissue>Brain</tissue>
    </source>
</reference>
<reference key="2">
    <citation type="journal article" date="2005" name="Science">
        <title>The transcriptional landscape of the mammalian genome.</title>
        <authorList>
            <person name="Carninci P."/>
            <person name="Kasukawa T."/>
            <person name="Katayama S."/>
            <person name="Gough J."/>
            <person name="Frith M.C."/>
            <person name="Maeda N."/>
            <person name="Oyama R."/>
            <person name="Ravasi T."/>
            <person name="Lenhard B."/>
            <person name="Wells C."/>
            <person name="Kodzius R."/>
            <person name="Shimokawa K."/>
            <person name="Bajic V.B."/>
            <person name="Brenner S.E."/>
            <person name="Batalov S."/>
            <person name="Forrest A.R."/>
            <person name="Zavolan M."/>
            <person name="Davis M.J."/>
            <person name="Wilming L.G."/>
            <person name="Aidinis V."/>
            <person name="Allen J.E."/>
            <person name="Ambesi-Impiombato A."/>
            <person name="Apweiler R."/>
            <person name="Aturaliya R.N."/>
            <person name="Bailey T.L."/>
            <person name="Bansal M."/>
            <person name="Baxter L."/>
            <person name="Beisel K.W."/>
            <person name="Bersano T."/>
            <person name="Bono H."/>
            <person name="Chalk A.M."/>
            <person name="Chiu K.P."/>
            <person name="Choudhary V."/>
            <person name="Christoffels A."/>
            <person name="Clutterbuck D.R."/>
            <person name="Crowe M.L."/>
            <person name="Dalla E."/>
            <person name="Dalrymple B.P."/>
            <person name="de Bono B."/>
            <person name="Della Gatta G."/>
            <person name="di Bernardo D."/>
            <person name="Down T."/>
            <person name="Engstrom P."/>
            <person name="Fagiolini M."/>
            <person name="Faulkner G."/>
            <person name="Fletcher C.F."/>
            <person name="Fukushima T."/>
            <person name="Furuno M."/>
            <person name="Futaki S."/>
            <person name="Gariboldi M."/>
            <person name="Georgii-Hemming P."/>
            <person name="Gingeras T.R."/>
            <person name="Gojobori T."/>
            <person name="Green R.E."/>
            <person name="Gustincich S."/>
            <person name="Harbers M."/>
            <person name="Hayashi Y."/>
            <person name="Hensch T.K."/>
            <person name="Hirokawa N."/>
            <person name="Hill D."/>
            <person name="Huminiecki L."/>
            <person name="Iacono M."/>
            <person name="Ikeo K."/>
            <person name="Iwama A."/>
            <person name="Ishikawa T."/>
            <person name="Jakt M."/>
            <person name="Kanapin A."/>
            <person name="Katoh M."/>
            <person name="Kawasawa Y."/>
            <person name="Kelso J."/>
            <person name="Kitamura H."/>
            <person name="Kitano H."/>
            <person name="Kollias G."/>
            <person name="Krishnan S.P."/>
            <person name="Kruger A."/>
            <person name="Kummerfeld S.K."/>
            <person name="Kurochkin I.V."/>
            <person name="Lareau L.F."/>
            <person name="Lazarevic D."/>
            <person name="Lipovich L."/>
            <person name="Liu J."/>
            <person name="Liuni S."/>
            <person name="McWilliam S."/>
            <person name="Madan Babu M."/>
            <person name="Madera M."/>
            <person name="Marchionni L."/>
            <person name="Matsuda H."/>
            <person name="Matsuzawa S."/>
            <person name="Miki H."/>
            <person name="Mignone F."/>
            <person name="Miyake S."/>
            <person name="Morris K."/>
            <person name="Mottagui-Tabar S."/>
            <person name="Mulder N."/>
            <person name="Nakano N."/>
            <person name="Nakauchi H."/>
            <person name="Ng P."/>
            <person name="Nilsson R."/>
            <person name="Nishiguchi S."/>
            <person name="Nishikawa S."/>
            <person name="Nori F."/>
            <person name="Ohara O."/>
            <person name="Okazaki Y."/>
            <person name="Orlando V."/>
            <person name="Pang K.C."/>
            <person name="Pavan W.J."/>
            <person name="Pavesi G."/>
            <person name="Pesole G."/>
            <person name="Petrovsky N."/>
            <person name="Piazza S."/>
            <person name="Reed J."/>
            <person name="Reid J.F."/>
            <person name="Ring B.Z."/>
            <person name="Ringwald M."/>
            <person name="Rost B."/>
            <person name="Ruan Y."/>
            <person name="Salzberg S.L."/>
            <person name="Sandelin A."/>
            <person name="Schneider C."/>
            <person name="Schoenbach C."/>
            <person name="Sekiguchi K."/>
            <person name="Semple C.A."/>
            <person name="Seno S."/>
            <person name="Sessa L."/>
            <person name="Sheng Y."/>
            <person name="Shibata Y."/>
            <person name="Shimada H."/>
            <person name="Shimada K."/>
            <person name="Silva D."/>
            <person name="Sinclair B."/>
            <person name="Sperling S."/>
            <person name="Stupka E."/>
            <person name="Sugiura K."/>
            <person name="Sultana R."/>
            <person name="Takenaka Y."/>
            <person name="Taki K."/>
            <person name="Tammoja K."/>
            <person name="Tan S.L."/>
            <person name="Tang S."/>
            <person name="Taylor M.S."/>
            <person name="Tegner J."/>
            <person name="Teichmann S.A."/>
            <person name="Ueda H.R."/>
            <person name="van Nimwegen E."/>
            <person name="Verardo R."/>
            <person name="Wei C.L."/>
            <person name="Yagi K."/>
            <person name="Yamanishi H."/>
            <person name="Zabarovsky E."/>
            <person name="Zhu S."/>
            <person name="Zimmer A."/>
            <person name="Hide W."/>
            <person name="Bult C."/>
            <person name="Grimmond S.M."/>
            <person name="Teasdale R.D."/>
            <person name="Liu E.T."/>
            <person name="Brusic V."/>
            <person name="Quackenbush J."/>
            <person name="Wahlestedt C."/>
            <person name="Mattick J.S."/>
            <person name="Hume D.A."/>
            <person name="Kai C."/>
            <person name="Sasaki D."/>
            <person name="Tomaru Y."/>
            <person name="Fukuda S."/>
            <person name="Kanamori-Katayama M."/>
            <person name="Suzuki M."/>
            <person name="Aoki J."/>
            <person name="Arakawa T."/>
            <person name="Iida J."/>
            <person name="Imamura K."/>
            <person name="Itoh M."/>
            <person name="Kato T."/>
            <person name="Kawaji H."/>
            <person name="Kawagashira N."/>
            <person name="Kawashima T."/>
            <person name="Kojima M."/>
            <person name="Kondo S."/>
            <person name="Konno H."/>
            <person name="Nakano K."/>
            <person name="Ninomiya N."/>
            <person name="Nishio T."/>
            <person name="Okada M."/>
            <person name="Plessy C."/>
            <person name="Shibata K."/>
            <person name="Shiraki T."/>
            <person name="Suzuki S."/>
            <person name="Tagami M."/>
            <person name="Waki K."/>
            <person name="Watahiki A."/>
            <person name="Okamura-Oho Y."/>
            <person name="Suzuki H."/>
            <person name="Kawai J."/>
            <person name="Hayashizaki Y."/>
        </authorList>
    </citation>
    <scope>NUCLEOTIDE SEQUENCE [LARGE SCALE MRNA]</scope>
    <source>
        <strain>C57BL/6J</strain>
        <tissue>Testis</tissue>
    </source>
</reference>
<reference key="3">
    <citation type="journal article" date="2004" name="Genome Res.">
        <title>The status, quality, and expansion of the NIH full-length cDNA project: the Mammalian Gene Collection (MGC).</title>
        <authorList>
            <consortium name="The MGC Project Team"/>
        </authorList>
    </citation>
    <scope>NUCLEOTIDE SEQUENCE [LARGE SCALE MRNA]</scope>
    <source>
        <tissue>Kidney</tissue>
    </source>
</reference>
<reference key="4">
    <citation type="journal article" date="2001" name="EMBO J.">
        <title>TRIP-Br: a novel family of PHD zinc finger- and bromodomain-interacting proteins that regulate the transcriptional activity of E2F-1/DP-1.</title>
        <authorList>
            <person name="Hsu S.-I."/>
            <person name="Yang C.M."/>
            <person name="Sim K.G."/>
            <person name="Hentschel D.M."/>
            <person name="O'Leary E."/>
            <person name="Bonventre J.V."/>
        </authorList>
    </citation>
    <scope>NUCLEOTIDE SEQUENCE [MRNA] OF 129-309</scope>
</reference>
<reference key="5">
    <citation type="journal article" date="2013" name="Nat. Med.">
        <title>Ablation of TRIP-Br2, a regulator of fat lipolysis, thermogenesis and oxidative metabolism, prevents diet-induced obesity and insulin resistance.</title>
        <authorList>
            <person name="Liew C.W."/>
            <person name="Boucher J."/>
            <person name="Cheong J.K."/>
            <person name="Vernochet C."/>
            <person name="Koh H.J."/>
            <person name="Mallol C."/>
            <person name="Townsend K."/>
            <person name="Langin D."/>
            <person name="Kawamori D."/>
            <person name="Hu J."/>
            <person name="Tseng Y.H."/>
            <person name="Hellerstein M.K."/>
            <person name="Farmer S.R."/>
            <person name="Goodyear L."/>
            <person name="Doria A."/>
            <person name="Blueher M."/>
            <person name="Hsu S.I."/>
            <person name="Kulkarni R.N."/>
        </authorList>
    </citation>
    <scope>FUNCTION IN ADIPOGENESIS</scope>
    <scope>INDUCTION</scope>
    <scope>DISRUPTION PHENOTYPE</scope>
    <scope>TISSUE SPECIFICITY</scope>
</reference>
<gene>
    <name type="primary">Sertad2</name>
    <name type="synonym">Kiaa0127</name>
    <name type="ORF">MNCb-1504</name>
</gene>
<evidence type="ECO:0000250" key="1"/>
<evidence type="ECO:0000255" key="2">
    <source>
        <dbReference type="PROSITE-ProRule" id="PRU00396"/>
    </source>
</evidence>
<evidence type="ECO:0000256" key="3">
    <source>
        <dbReference type="SAM" id="MobiDB-lite"/>
    </source>
</evidence>
<evidence type="ECO:0000269" key="4">
    <source>
    </source>
</evidence>
<evidence type="ECO:0000305" key="5"/>
<dbReference type="EMBL" id="AB041541">
    <property type="protein sequence ID" value="BAA95026.1"/>
    <property type="molecule type" value="mRNA"/>
</dbReference>
<dbReference type="EMBL" id="AK076787">
    <property type="protein sequence ID" value="BAC36480.1"/>
    <property type="molecule type" value="mRNA"/>
</dbReference>
<dbReference type="EMBL" id="BC014726">
    <property type="protein sequence ID" value="AAH14726.1"/>
    <property type="molecule type" value="mRNA"/>
</dbReference>
<dbReference type="EMBL" id="AF366403">
    <property type="protein sequence ID" value="AAK52832.1"/>
    <property type="molecule type" value="mRNA"/>
</dbReference>
<dbReference type="CCDS" id="CCDS24458.1"/>
<dbReference type="RefSeq" id="NP_001033714.1">
    <property type="nucleotide sequence ID" value="NM_001038625.1"/>
</dbReference>
<dbReference type="RefSeq" id="NP_067347.2">
    <property type="nucleotide sequence ID" value="NM_021372.3"/>
</dbReference>
<dbReference type="RefSeq" id="XP_006514829.1">
    <property type="nucleotide sequence ID" value="XM_006514766.5"/>
</dbReference>
<dbReference type="RefSeq" id="XP_036012764.1">
    <property type="nucleotide sequence ID" value="XM_036156871.1"/>
</dbReference>
<dbReference type="BioGRID" id="208368">
    <property type="interactions" value="2"/>
</dbReference>
<dbReference type="CORUM" id="Q9JJG5"/>
<dbReference type="FunCoup" id="Q9JJG5">
    <property type="interactions" value="3515"/>
</dbReference>
<dbReference type="IntAct" id="Q9JJG5">
    <property type="interactions" value="1"/>
</dbReference>
<dbReference type="STRING" id="10090.ENSMUSP00000090981"/>
<dbReference type="PhosphoSitePlus" id="Q9JJG5"/>
<dbReference type="PaxDb" id="10090-ENSMUSP00000090981"/>
<dbReference type="ProteomicsDB" id="258622"/>
<dbReference type="Antibodypedia" id="16073">
    <property type="antibodies" value="135 antibodies from 17 providers"/>
</dbReference>
<dbReference type="Ensembl" id="ENSMUST00000093292.11">
    <property type="protein sequence ID" value="ENSMUSP00000090981.5"/>
    <property type="gene ID" value="ENSMUSG00000049800.14"/>
</dbReference>
<dbReference type="Ensembl" id="ENSMUST00000109585.2">
    <property type="protein sequence ID" value="ENSMUSP00000105214.2"/>
    <property type="gene ID" value="ENSMUSG00000049800.14"/>
</dbReference>
<dbReference type="Ensembl" id="ENSMUST00000109586.3">
    <property type="protein sequence ID" value="ENSMUSP00000105215.3"/>
    <property type="gene ID" value="ENSMUSG00000049800.14"/>
</dbReference>
<dbReference type="GeneID" id="58172"/>
<dbReference type="KEGG" id="mmu:58172"/>
<dbReference type="UCSC" id="uc007idc.1">
    <property type="organism name" value="mouse"/>
</dbReference>
<dbReference type="AGR" id="MGI:1931026"/>
<dbReference type="CTD" id="9792"/>
<dbReference type="MGI" id="MGI:1931026">
    <property type="gene designation" value="Sertad2"/>
</dbReference>
<dbReference type="VEuPathDB" id="HostDB:ENSMUSG00000049800"/>
<dbReference type="eggNOG" id="ENOG502QUG8">
    <property type="taxonomic scope" value="Eukaryota"/>
</dbReference>
<dbReference type="GeneTree" id="ENSGT00530000063867"/>
<dbReference type="HOGENOM" id="CLU_065586_0_0_1"/>
<dbReference type="InParanoid" id="Q9JJG5"/>
<dbReference type="OMA" id="FCAVSPP"/>
<dbReference type="PhylomeDB" id="Q9JJG5"/>
<dbReference type="TreeFam" id="TF331620"/>
<dbReference type="BioGRID-ORCS" id="58172">
    <property type="hits" value="1 hit in 76 CRISPR screens"/>
</dbReference>
<dbReference type="ChiTaRS" id="Sertad2">
    <property type="organism name" value="mouse"/>
</dbReference>
<dbReference type="PRO" id="PR:Q9JJG5"/>
<dbReference type="Proteomes" id="UP000000589">
    <property type="component" value="Chromosome 11"/>
</dbReference>
<dbReference type="RNAct" id="Q9JJG5">
    <property type="molecule type" value="protein"/>
</dbReference>
<dbReference type="Bgee" id="ENSMUSG00000049800">
    <property type="expression patterns" value="Expressed in humerus cartilage element and 255 other cell types or tissues"/>
</dbReference>
<dbReference type="ExpressionAtlas" id="Q9JJG5">
    <property type="expression patterns" value="baseline and differential"/>
</dbReference>
<dbReference type="GO" id="GO:0005829">
    <property type="term" value="C:cytosol"/>
    <property type="evidence" value="ECO:0007669"/>
    <property type="project" value="Ensembl"/>
</dbReference>
<dbReference type="GO" id="GO:0005654">
    <property type="term" value="C:nucleoplasm"/>
    <property type="evidence" value="ECO:0007669"/>
    <property type="project" value="Ensembl"/>
</dbReference>
<dbReference type="GO" id="GO:0005634">
    <property type="term" value="C:nucleus"/>
    <property type="evidence" value="ECO:0000247"/>
    <property type="project" value="MGI"/>
</dbReference>
<dbReference type="GO" id="GO:0003713">
    <property type="term" value="F:transcription coactivator activity"/>
    <property type="evidence" value="ECO:0000314"/>
    <property type="project" value="MGI"/>
</dbReference>
<dbReference type="GO" id="GO:0030308">
    <property type="term" value="P:negative regulation of cell growth"/>
    <property type="evidence" value="ECO:0000247"/>
    <property type="project" value="MGI"/>
</dbReference>
<dbReference type="GO" id="GO:0045893">
    <property type="term" value="P:positive regulation of DNA-templated transcription"/>
    <property type="evidence" value="ECO:0000314"/>
    <property type="project" value="MGI"/>
</dbReference>
<dbReference type="InterPro" id="IPR052262">
    <property type="entry name" value="E2F-SERTA_domain_protein"/>
</dbReference>
<dbReference type="InterPro" id="IPR009263">
    <property type="entry name" value="SERTA_dom"/>
</dbReference>
<dbReference type="PANTHER" id="PTHR16277">
    <property type="entry name" value="CELL DIVISION CYCLE ASSOCIATED PROTEIN 4/SERTA DOMAIN-CONTAINING PROTEIN 2"/>
    <property type="match status" value="1"/>
</dbReference>
<dbReference type="PANTHER" id="PTHR16277:SF10">
    <property type="entry name" value="SERTA DOMAIN-CONTAINING PROTEIN 2"/>
    <property type="match status" value="1"/>
</dbReference>
<dbReference type="Pfam" id="PF06031">
    <property type="entry name" value="SERTA"/>
    <property type="match status" value="1"/>
</dbReference>
<dbReference type="PROSITE" id="PS51053">
    <property type="entry name" value="SERTA"/>
    <property type="match status" value="1"/>
</dbReference>
<proteinExistence type="evidence at protein level"/>
<name>SRTD2_MOUSE</name>
<keyword id="KW-0963">Cytoplasm</keyword>
<keyword id="KW-0539">Nucleus</keyword>
<keyword id="KW-1185">Reference proteome</keyword>
<keyword id="KW-0804">Transcription</keyword>
<keyword id="KW-0805">Transcription regulation</keyword>
<keyword id="KW-0832">Ubl conjugation</keyword>
<accession>Q9JJG5</accession>
<accession>Q8C609</accession>
<accession>Q91WL3</accession>
<accession>Q925E5</accession>
<organism>
    <name type="scientific">Mus musculus</name>
    <name type="common">Mouse</name>
    <dbReference type="NCBI Taxonomy" id="10090"/>
    <lineage>
        <taxon>Eukaryota</taxon>
        <taxon>Metazoa</taxon>
        <taxon>Chordata</taxon>
        <taxon>Craniata</taxon>
        <taxon>Vertebrata</taxon>
        <taxon>Euteleostomi</taxon>
        <taxon>Mammalia</taxon>
        <taxon>Eutheria</taxon>
        <taxon>Euarchontoglires</taxon>
        <taxon>Glires</taxon>
        <taxon>Rodentia</taxon>
        <taxon>Myomorpha</taxon>
        <taxon>Muroidea</taxon>
        <taxon>Muridae</taxon>
        <taxon>Murinae</taxon>
        <taxon>Mus</taxon>
        <taxon>Mus</taxon>
    </lineage>
</organism>
<sequence length="309" mass="33312">MLGKGGKRKFDEHEDGLEGKIVSPSDGPSRVSYTLQRQTIFNISLMKLYNHRPLTEPSLQKTVLINNMLRRIQEELKQEGSLRPAFTPSSQPSNSLSDSYQEAPPPAPHPCDLGSTTPLEACLTPASLLEDDNDDTFCTLQAVHPAAPTRLSSAALPAEKDSFSSALDEIEELCPTSTSTEAAHTAAPEGPKGTSSESSVQKPEGPEEGRTDDSRFMDSLPGNFEITTSTGFLTDLTLDDILFADIDTSMYDFDPCTSASGTASKMAPVSADDLLKTLAPYSNQPVAPSQPFKMDLTELDHIMEVLVGS</sequence>